<organism>
    <name type="scientific">Escherichia coli (strain K12)</name>
    <dbReference type="NCBI Taxonomy" id="83333"/>
    <lineage>
        <taxon>Bacteria</taxon>
        <taxon>Pseudomonadati</taxon>
        <taxon>Pseudomonadota</taxon>
        <taxon>Gammaproteobacteria</taxon>
        <taxon>Enterobacterales</taxon>
        <taxon>Enterobacteriaceae</taxon>
        <taxon>Escherichia</taxon>
    </lineage>
</organism>
<name>FDOG_ECOLI</name>
<accession>P32176</accession>
<accession>P78131</accession>
<accession>Q2M8J1</accession>
<evidence type="ECO:0000250" key="1"/>
<evidence type="ECO:0000255" key="2">
    <source>
        <dbReference type="PROSITE-ProRule" id="PRU00648"/>
    </source>
</evidence>
<evidence type="ECO:0000255" key="3">
    <source>
        <dbReference type="PROSITE-ProRule" id="PRU01004"/>
    </source>
</evidence>
<evidence type="ECO:0000305" key="4"/>
<reference key="1">
    <citation type="journal article" date="1993" name="Nucleic Acids Res.">
        <title>Analysis of the Escherichia coli genome. III. DNA sequence of the region from 87.2 to 89.2 minutes.</title>
        <authorList>
            <person name="Plunkett G. III"/>
            <person name="Burland V."/>
            <person name="Daniels D.L."/>
            <person name="Blattner F.R."/>
        </authorList>
    </citation>
    <scope>NUCLEOTIDE SEQUENCE [LARGE SCALE GENOMIC DNA]</scope>
    <source>
        <strain>K12 / MG1655 / ATCC 47076</strain>
    </source>
</reference>
<reference key="2">
    <citation type="journal article" date="1997" name="Science">
        <title>The complete genome sequence of Escherichia coli K-12.</title>
        <authorList>
            <person name="Blattner F.R."/>
            <person name="Plunkett G. III"/>
            <person name="Bloch C.A."/>
            <person name="Perna N.T."/>
            <person name="Burland V."/>
            <person name="Riley M."/>
            <person name="Collado-Vides J."/>
            <person name="Glasner J.D."/>
            <person name="Rode C.K."/>
            <person name="Mayhew G.F."/>
            <person name="Gregor J."/>
            <person name="Davis N.W."/>
            <person name="Kirkpatrick H.A."/>
            <person name="Goeden M.A."/>
            <person name="Rose D.J."/>
            <person name="Mau B."/>
            <person name="Shao Y."/>
        </authorList>
    </citation>
    <scope>NUCLEOTIDE SEQUENCE [LARGE SCALE GENOMIC DNA]</scope>
    <scope>SEQUENCE REVISION TO 252-261; 344-348 AND 822</scope>
    <source>
        <strain>K12 / MG1655 / ATCC 47076</strain>
    </source>
</reference>
<reference key="3">
    <citation type="journal article" date="2006" name="Mol. Syst. Biol.">
        <title>Highly accurate genome sequences of Escherichia coli K-12 strains MG1655 and W3110.</title>
        <authorList>
            <person name="Hayashi K."/>
            <person name="Morooka N."/>
            <person name="Yamamoto Y."/>
            <person name="Fujita K."/>
            <person name="Isono K."/>
            <person name="Choi S."/>
            <person name="Ohtsubo E."/>
            <person name="Baba T."/>
            <person name="Wanner B.L."/>
            <person name="Mori H."/>
            <person name="Horiuchi T."/>
        </authorList>
    </citation>
    <scope>NUCLEOTIDE SEQUENCE [LARGE SCALE GENOMIC DNA]</scope>
    <source>
        <strain>K12 / W3110 / ATCC 27325 / DSM 5911</strain>
    </source>
</reference>
<reference key="4">
    <citation type="journal article" date="1995" name="J. Bacteriol.">
        <title>Expression and characterization of the Escherichia coli fdo locus and a possible physiological role for aerobic formate dehydrogenase.</title>
        <authorList>
            <person name="Abaibou H."/>
            <person name="Pommier J."/>
            <person name="Giordano G."/>
            <person name="Mandrand-Berthelot M.-A."/>
        </authorList>
    </citation>
    <scope>NUCLEOTIDE SEQUENCE [GENOMIC DNA] OF 1-190</scope>
    <scope>CHARACTERIZATION</scope>
    <source>
        <strain>K12</strain>
    </source>
</reference>
<reference key="5">
    <citation type="journal article" date="2007" name="J. Biol. Chem.">
        <title>Export pathway selectivity of Escherichia coli twin arginine translocation signal peptides.</title>
        <authorList>
            <person name="Tullman-Ercek D."/>
            <person name="DeLisa M.P."/>
            <person name="Kawarasaki Y."/>
            <person name="Iranpour P."/>
            <person name="Ribnicky B."/>
            <person name="Palmer T."/>
            <person name="Georgiou G."/>
        </authorList>
    </citation>
    <scope>EXPORT VIA THE TAT-SYSTEM</scope>
</reference>
<comment type="function">
    <text>Allows to use formate as major electron donor during aerobic respiration. Subunit alpha possibly forms the active site.</text>
</comment>
<comment type="catalytic activity">
    <reaction>
        <text>formate + NAD(+) = CO2 + NADH</text>
        <dbReference type="Rhea" id="RHEA:15985"/>
        <dbReference type="ChEBI" id="CHEBI:15740"/>
        <dbReference type="ChEBI" id="CHEBI:16526"/>
        <dbReference type="ChEBI" id="CHEBI:57540"/>
        <dbReference type="ChEBI" id="CHEBI:57945"/>
        <dbReference type="EC" id="1.17.1.9"/>
    </reaction>
</comment>
<comment type="cofactor">
    <cofactor evidence="1">
        <name>Mo-bis(molybdopterin guanine dinucleotide)</name>
        <dbReference type="ChEBI" id="CHEBI:60539"/>
    </cofactor>
    <text evidence="1">Binds 1 molybdenum-bis(molybdopterin guanine dinucleotide) (Mo-bis-MGD) cofactor per subunit.</text>
</comment>
<comment type="cofactor">
    <cofactor evidence="4">
        <name>[4Fe-4S] cluster</name>
        <dbReference type="ChEBI" id="CHEBI:49883"/>
    </cofactor>
    <text evidence="4">Binds 1 [4Fe-4S] cluster.</text>
</comment>
<comment type="subunit">
    <text>Formate dehydrogenase is a membrane-bound complex, formed by subunits alpha, beta and gamma.</text>
</comment>
<comment type="interaction">
    <interactant intactId="EBI-368676">
        <id>P32176</id>
    </interactant>
    <interactant intactId="EBI-550129">
        <id>P13024</id>
        <label>fdhE</label>
    </interactant>
    <organismsDiffer>false</organismsDiffer>
    <experiments>4</experiments>
</comment>
<comment type="subcellular location">
    <subcellularLocation>
        <location evidence="4">Periplasm</location>
    </subcellularLocation>
</comment>
<comment type="PTM">
    <text>Exported by the Tat system. The position of the signal peptide cleavage has not been experimentally proven.</text>
</comment>
<comment type="similarity">
    <text evidence="4">Belongs to the prokaryotic molybdopterin-containing oxidoreductase family.</text>
</comment>
<dbReference type="EC" id="1.17.1.9"/>
<dbReference type="EMBL" id="L19201">
    <property type="protein sequence ID" value="AAB03027.2"/>
    <property type="molecule type" value="Genomic_DNA"/>
</dbReference>
<dbReference type="EMBL" id="U00096">
    <property type="protein sequence ID" value="AAD13456.1"/>
    <property type="molecule type" value="Genomic_DNA"/>
</dbReference>
<dbReference type="EMBL" id="AP009048">
    <property type="protein sequence ID" value="BAE77415.1"/>
    <property type="molecule type" value="Genomic_DNA"/>
</dbReference>
<dbReference type="EMBL" id="X87583">
    <property type="protein sequence ID" value="CAA60887.1"/>
    <property type="molecule type" value="Genomic_DNA"/>
</dbReference>
<dbReference type="PIR" id="A65195">
    <property type="entry name" value="S40838"/>
</dbReference>
<dbReference type="RefSeq" id="NP_418330.1">
    <property type="nucleotide sequence ID" value="NC_000913.3"/>
</dbReference>
<dbReference type="BioGRID" id="4263323">
    <property type="interactions" value="46"/>
</dbReference>
<dbReference type="BioGRID" id="852691">
    <property type="interactions" value="1"/>
</dbReference>
<dbReference type="ComplexPortal" id="CPX-6029">
    <property type="entry name" value="Formate dehydrogenase Z complex"/>
</dbReference>
<dbReference type="DIP" id="DIP-9576N"/>
<dbReference type="FunCoup" id="P32176">
    <property type="interactions" value="266"/>
</dbReference>
<dbReference type="IntAct" id="P32176">
    <property type="interactions" value="12"/>
</dbReference>
<dbReference type="MINT" id="P32176"/>
<dbReference type="STRING" id="511145.b3894"/>
<dbReference type="jPOST" id="P32176"/>
<dbReference type="PaxDb" id="511145-b3894"/>
<dbReference type="GeneID" id="948394"/>
<dbReference type="KEGG" id="ecj:JW3865"/>
<dbReference type="KEGG" id="eco:b3894"/>
<dbReference type="PATRIC" id="fig|511145.12.peg.4008"/>
<dbReference type="EchoBASE" id="EB1804"/>
<dbReference type="eggNOG" id="COG0243">
    <property type="taxonomic scope" value="Bacteria"/>
</dbReference>
<dbReference type="eggNOG" id="COG3383">
    <property type="taxonomic scope" value="Bacteria"/>
</dbReference>
<dbReference type="HOGENOM" id="CLU_000422_1_0_6"/>
<dbReference type="InParanoid" id="P32176"/>
<dbReference type="OMA" id="QYFEMMN"/>
<dbReference type="PhylomeDB" id="P32176"/>
<dbReference type="BioCyc" id="EcoCyc:FDOG-MONOMER"/>
<dbReference type="BioCyc" id="MetaCyc:FDOG-MONOMER"/>
<dbReference type="PHI-base" id="PHI:10994"/>
<dbReference type="PRO" id="PR:P32176"/>
<dbReference type="Proteomes" id="UP000000625">
    <property type="component" value="Chromosome"/>
</dbReference>
<dbReference type="GO" id="GO:0005829">
    <property type="term" value="C:cytosol"/>
    <property type="evidence" value="ECO:0000314"/>
    <property type="project" value="EcoCyc"/>
</dbReference>
<dbReference type="GO" id="GO:0009326">
    <property type="term" value="C:formate dehydrogenase complex"/>
    <property type="evidence" value="ECO:0000314"/>
    <property type="project" value="EcoCyc"/>
</dbReference>
<dbReference type="GO" id="GO:0016020">
    <property type="term" value="C:membrane"/>
    <property type="evidence" value="ECO:0007005"/>
    <property type="project" value="UniProtKB"/>
</dbReference>
<dbReference type="GO" id="GO:0042597">
    <property type="term" value="C:periplasmic space"/>
    <property type="evidence" value="ECO:0007669"/>
    <property type="project" value="UniProtKB-SubCell"/>
</dbReference>
<dbReference type="GO" id="GO:0005886">
    <property type="term" value="C:plasma membrane"/>
    <property type="evidence" value="ECO:0007005"/>
    <property type="project" value="EcoCyc"/>
</dbReference>
<dbReference type="GO" id="GO:0051539">
    <property type="term" value="F:4 iron, 4 sulfur cluster binding"/>
    <property type="evidence" value="ECO:0007669"/>
    <property type="project" value="UniProtKB-KW"/>
</dbReference>
<dbReference type="GO" id="GO:0009055">
    <property type="term" value="F:electron transfer activity"/>
    <property type="evidence" value="ECO:0000318"/>
    <property type="project" value="GO_Central"/>
</dbReference>
<dbReference type="GO" id="GO:0047111">
    <property type="term" value="F:formate dehydrogenase (cytochrome-c-553) activity"/>
    <property type="evidence" value="ECO:0007669"/>
    <property type="project" value="InterPro"/>
</dbReference>
<dbReference type="GO" id="GO:0008863">
    <property type="term" value="F:formate dehydrogenase (NAD+) activity"/>
    <property type="evidence" value="ECO:0007669"/>
    <property type="project" value="UniProtKB-EC"/>
</dbReference>
<dbReference type="GO" id="GO:0036397">
    <property type="term" value="F:formate dehydrogenase (quinone) activity"/>
    <property type="evidence" value="ECO:0000314"/>
    <property type="project" value="EcoCyc"/>
</dbReference>
<dbReference type="GO" id="GO:0046872">
    <property type="term" value="F:metal ion binding"/>
    <property type="evidence" value="ECO:0007669"/>
    <property type="project" value="UniProtKB-KW"/>
</dbReference>
<dbReference type="GO" id="GO:0043546">
    <property type="term" value="F:molybdopterin cofactor binding"/>
    <property type="evidence" value="ECO:0007669"/>
    <property type="project" value="InterPro"/>
</dbReference>
<dbReference type="GO" id="GO:0019645">
    <property type="term" value="P:anaerobic electron transport chain"/>
    <property type="evidence" value="ECO:0000303"/>
    <property type="project" value="ComplexPortal"/>
</dbReference>
<dbReference type="GO" id="GO:0009061">
    <property type="term" value="P:anaerobic respiration"/>
    <property type="evidence" value="ECO:0000269"/>
    <property type="project" value="EcoCyc"/>
</dbReference>
<dbReference type="GO" id="GO:0045333">
    <property type="term" value="P:cellular respiration"/>
    <property type="evidence" value="ECO:0000270"/>
    <property type="project" value="EcoCyc"/>
</dbReference>
<dbReference type="GO" id="GO:0006974">
    <property type="term" value="P:DNA damage response"/>
    <property type="evidence" value="ECO:0000270"/>
    <property type="project" value="EcoliWiki"/>
</dbReference>
<dbReference type="GO" id="GO:0015944">
    <property type="term" value="P:formate oxidation"/>
    <property type="evidence" value="ECO:0000314"/>
    <property type="project" value="EcoCyc"/>
</dbReference>
<dbReference type="GO" id="GO:0006788">
    <property type="term" value="P:heme oxidation"/>
    <property type="evidence" value="ECO:0000303"/>
    <property type="project" value="ComplexPortal"/>
</dbReference>
<dbReference type="CDD" id="cd02792">
    <property type="entry name" value="MopB_CT_Formate-Dh-Na-like"/>
    <property type="match status" value="1"/>
</dbReference>
<dbReference type="CDD" id="cd02752">
    <property type="entry name" value="MopB_Formate-Dh-Na-like"/>
    <property type="match status" value="1"/>
</dbReference>
<dbReference type="FunFam" id="2.40.40.20:FF:000017">
    <property type="entry name" value="Formate dehydrogenase, alpha subunit"/>
    <property type="match status" value="1"/>
</dbReference>
<dbReference type="FunFam" id="3.40.228.10:FF:000006">
    <property type="entry name" value="Formate dehydrogenase, alpha subunit, selenocysteine-containing"/>
    <property type="match status" value="1"/>
</dbReference>
<dbReference type="FunFam" id="3.40.50.740:FF:000007">
    <property type="entry name" value="Formate dehydrogenase, alpha subunit, selenocysteine-containing"/>
    <property type="match status" value="1"/>
</dbReference>
<dbReference type="FunFam" id="3.30.200.210:FF:000003">
    <property type="entry name" value="Formate dehydrogenase-N subunit alpha"/>
    <property type="match status" value="1"/>
</dbReference>
<dbReference type="FunFam" id="3.40.228.10:FF:000011">
    <property type="entry name" value="Formate dehydrogenase-N subunit alpha"/>
    <property type="match status" value="1"/>
</dbReference>
<dbReference type="Gene3D" id="2.40.40.20">
    <property type="match status" value="1"/>
</dbReference>
<dbReference type="Gene3D" id="3.30.200.210">
    <property type="match status" value="1"/>
</dbReference>
<dbReference type="Gene3D" id="3.40.50.740">
    <property type="match status" value="1"/>
</dbReference>
<dbReference type="Gene3D" id="3.40.228.10">
    <property type="entry name" value="Dimethylsulfoxide Reductase, domain 2"/>
    <property type="match status" value="2"/>
</dbReference>
<dbReference type="InterPro" id="IPR009010">
    <property type="entry name" value="Asp_de-COase-like_dom_sf"/>
</dbReference>
<dbReference type="InterPro" id="IPR006443">
    <property type="entry name" value="Formate-DH-alph_fdnG"/>
</dbReference>
<dbReference type="InterPro" id="IPR006657">
    <property type="entry name" value="MoPterin_dinucl-bd_dom"/>
</dbReference>
<dbReference type="InterPro" id="IPR006656">
    <property type="entry name" value="Mopterin_OxRdtase"/>
</dbReference>
<dbReference type="InterPro" id="IPR006963">
    <property type="entry name" value="Mopterin_OxRdtase_4Fe-4S_dom"/>
</dbReference>
<dbReference type="InterPro" id="IPR006655">
    <property type="entry name" value="Mopterin_OxRdtase_prok_CS"/>
</dbReference>
<dbReference type="InterPro" id="IPR027467">
    <property type="entry name" value="MopterinOxRdtase_cofactor_BS"/>
</dbReference>
<dbReference type="InterPro" id="IPR006311">
    <property type="entry name" value="TAT_signal"/>
</dbReference>
<dbReference type="NCBIfam" id="TIGR01553">
    <property type="entry name" value="formate-DH-alph"/>
    <property type="match status" value="1"/>
</dbReference>
<dbReference type="PANTHER" id="PTHR43598:SF1">
    <property type="entry name" value="FORMATE DEHYDROGENASE-O MAJOR SUBUNIT"/>
    <property type="match status" value="1"/>
</dbReference>
<dbReference type="PANTHER" id="PTHR43598">
    <property type="entry name" value="TUNGSTEN-CONTAINING FORMYLMETHANOFURAN DEHYDROGENASE 2 SUBUNIT B"/>
    <property type="match status" value="1"/>
</dbReference>
<dbReference type="Pfam" id="PF04879">
    <property type="entry name" value="Molybdop_Fe4S4"/>
    <property type="match status" value="1"/>
</dbReference>
<dbReference type="Pfam" id="PF00384">
    <property type="entry name" value="Molybdopterin"/>
    <property type="match status" value="1"/>
</dbReference>
<dbReference type="Pfam" id="PF01568">
    <property type="entry name" value="Molydop_binding"/>
    <property type="match status" value="1"/>
</dbReference>
<dbReference type="SMART" id="SM00926">
    <property type="entry name" value="Molybdop_Fe4S4"/>
    <property type="match status" value="1"/>
</dbReference>
<dbReference type="SUPFAM" id="SSF50692">
    <property type="entry name" value="ADC-like"/>
    <property type="match status" value="1"/>
</dbReference>
<dbReference type="SUPFAM" id="SSF53706">
    <property type="entry name" value="Formate dehydrogenase/DMSO reductase, domains 1-3"/>
    <property type="match status" value="1"/>
</dbReference>
<dbReference type="PROSITE" id="PS51669">
    <property type="entry name" value="4FE4S_MOW_BIS_MGD"/>
    <property type="match status" value="1"/>
</dbReference>
<dbReference type="PROSITE" id="PS00551">
    <property type="entry name" value="MOLYBDOPTERIN_PROK_1"/>
    <property type="match status" value="1"/>
</dbReference>
<dbReference type="PROSITE" id="PS00932">
    <property type="entry name" value="MOLYBDOPTERIN_PROK_3"/>
    <property type="match status" value="1"/>
</dbReference>
<dbReference type="PROSITE" id="PS51318">
    <property type="entry name" value="TAT"/>
    <property type="match status" value="1"/>
</dbReference>
<sequence>MQVSRRQFFKICAGGMAGTTAAALGFAPSVALAETRQYKLLRTRETRNTCTYCSVGCGLLMYSLGDGAKNAKASIFHIEGDPDHPVNRGALCPKGAGLVDFIHSESRLKFPEYRAPGSDKWQQISWEEAFDRIAKLMKEDRDANYIAQNAEGVTVNRWLSTGMLCASASSNETGYLTQKFSRALGMLAVDNQARVUHGPTVASLAPTFGRGAMTNHWVDIKNANLVVVMGGNAAEAHPVGFRWAMEAKIHNGAKLIVIDPRFTRTAAVADYYAPIRSGTDIAFLSGVLLYLLNNEKFNREYTEAYTNASLIVREDYGFEDGLFTGYDAEKRKYDKSSWTYELDENGFAKRDTTLQHPRCVWNLLKQHVSRYTPDVVENICGTPKDAFLKVCEYIAETSAHDKTASFLYALGWTQHSVGAQNIRTMAMIQLLLGNMGMAGGGVNALRGHSNIQGLTDLGLLSQSLPGYMTLPSEKQTDLQTYLTANTPKPLLEGQVNYWGNYPKFFVSMMKAFFGDKATAENSWGFDWLPKWDKGYDVLQYFEMMKEGKVNGYICQGFNPVASFPNKNKVIGCLSKLKFLVTIDPLNTETSNFWQNHGELNEVDSSKIQTEVFRLPSTCFAEENGSIVNSGRWLQWHWKGADAPGIALTDGEILSGIFLRLRKMYAEQGGANPDQVLNMTWNYAIPHEPSSEEVAMESNGKALADITDPATGAVIVKKGQQLSSFAQLRDDGTTSCGCWIFAGSWTPEGNQMARRDNADPSGLGNTLGWAWAWPLNRRILYNRASADPQGNPWDPKRQLLKWDGTKWTGWDIPDYSAAPPGSGVGPFIMQQEGMGRLFALDKMAEGPFPEHYEPFETPLGTNPLHPNVISNPAARIFKDDAEALGKADKFPYVGTTYRLTEHFHYWTKHALLNAILQPEQFVEIGESLANKLGIAQGDTVKVSSNRGYIKAKAVVTKRIRTLKANGKDIDTIGIPIHWGYEGVAKKGFIANTLTPFVGDANTQTPEFKSFLVNVEKV</sequence>
<feature type="signal peptide" description="Tat-type signal" evidence="2">
    <location>
        <begin position="1"/>
        <end position="33"/>
    </location>
</feature>
<feature type="chain" id="PRO_0000063223" description="Formate dehydrogenase-O major subunit">
    <location>
        <begin position="34"/>
        <end position="1016"/>
    </location>
</feature>
<feature type="domain" description="4Fe-4S Mo/W bis-MGD-type" evidence="3">
    <location>
        <begin position="43"/>
        <end position="106"/>
    </location>
</feature>
<feature type="binding site" evidence="3">
    <location>
        <position position="50"/>
    </location>
    <ligand>
        <name>[4Fe-4S] cluster</name>
        <dbReference type="ChEBI" id="CHEBI:49883"/>
    </ligand>
</feature>
<feature type="binding site" evidence="3">
    <location>
        <position position="53"/>
    </location>
    <ligand>
        <name>[4Fe-4S] cluster</name>
        <dbReference type="ChEBI" id="CHEBI:49883"/>
    </ligand>
</feature>
<feature type="binding site" evidence="3">
    <location>
        <position position="57"/>
    </location>
    <ligand>
        <name>[4Fe-4S] cluster</name>
        <dbReference type="ChEBI" id="CHEBI:49883"/>
    </ligand>
</feature>
<feature type="binding site" evidence="3">
    <location>
        <position position="92"/>
    </location>
    <ligand>
        <name>[4Fe-4S] cluster</name>
        <dbReference type="ChEBI" id="CHEBI:49883"/>
    </ligand>
</feature>
<feature type="non-standard amino acid" description="Selenocysteine">
    <location>
        <position position="196"/>
    </location>
</feature>
<feature type="sequence conflict" description="In Ref. 1; AAB03027." evidence="4" ref="1">
    <original>GAKLIVIDPR</original>
    <variation>RREADCDRSC</variation>
    <location>
        <begin position="252"/>
        <end position="261"/>
    </location>
</feature>
<feature type="sequence conflict" description="In Ref. 1; AAB03027." evidence="4" ref="1">
    <original>ENGFA</original>
    <variation>GKRLR</variation>
    <location>
        <begin position="344"/>
        <end position="348"/>
    </location>
</feature>
<gene>
    <name type="primary">fdoG</name>
    <name type="ordered locus">b3894</name>
    <name type="ordered locus">JW3865</name>
</gene>
<keyword id="KW-0004">4Fe-4S</keyword>
<keyword id="KW-0408">Iron</keyword>
<keyword id="KW-0411">Iron-sulfur</keyword>
<keyword id="KW-0479">Metal-binding</keyword>
<keyword id="KW-0500">Molybdenum</keyword>
<keyword id="KW-0520">NAD</keyword>
<keyword id="KW-0560">Oxidoreductase</keyword>
<keyword id="KW-0574">Periplasm</keyword>
<keyword id="KW-1185">Reference proteome</keyword>
<keyword id="KW-0712">Selenocysteine</keyword>
<keyword id="KW-0732">Signal</keyword>
<protein>
    <recommendedName>
        <fullName>Formate dehydrogenase-O major subunit</fullName>
        <ecNumber>1.17.1.9</ecNumber>
    </recommendedName>
    <alternativeName>
        <fullName>Aerobic formate dehydrogenase major subunit</fullName>
    </alternativeName>
    <alternativeName>
        <fullName>FDH-Z subunit alpha</fullName>
    </alternativeName>
    <alternativeName>
        <fullName>Formate dehydrogenase-O subunit alpha</fullName>
    </alternativeName>
</protein>
<proteinExistence type="evidence at protein level"/>